<comment type="function">
    <molecule>Picornain 3C-like protease</molecule>
    <text evidence="11 12 16">Thiol protease that cleaves the RNA1 and RNA2 polyproteins.</text>
</comment>
<comment type="function">
    <molecule>Viral genome-linked protein</molecule>
    <text evidence="6 10">Plays a role in RNA replication. It is covalently linked to the 5'terminus of both viral single-stranded RNA1 and RNA2 molecules.</text>
</comment>
<comment type="function">
    <molecule>Protease cofactor</molecule>
    <text evidence="7 8">Down-regulates the RNA1 polyprotein processing and enhances trans-cleavage of RNA2 polyproteins (PubMed:1413528). The protease cofactor and the putative helicase seem to target the replication complexes to ER membranes. Their physical association causes the membrane rearrangement of host ER that may result in formation of the small membranous vesicles that are the site of viral RNA synthesis (PubMed:12021362).</text>
</comment>
<comment type="function">
    <molecule>Putative helicase</molecule>
    <text evidence="7">The protease cofactor and the putative helicase seem to target the replication complexes to ER membranes. Their physical association causes the membrane rearrangement of host ER that may result in formation of the small membranous vesicles that are the site of viral RNA synthesis.</text>
</comment>
<comment type="function">
    <molecule>RNA-directed RNA polymerase</molecule>
    <text evidence="19">Replicates the viral genome.</text>
</comment>
<comment type="catalytic activity">
    <reaction evidence="2">
        <text>RNA(n) + a ribonucleoside 5'-triphosphate = RNA(n+1) + diphosphate</text>
        <dbReference type="Rhea" id="RHEA:21248"/>
        <dbReference type="Rhea" id="RHEA-COMP:14527"/>
        <dbReference type="Rhea" id="RHEA-COMP:17342"/>
        <dbReference type="ChEBI" id="CHEBI:33019"/>
        <dbReference type="ChEBI" id="CHEBI:61557"/>
        <dbReference type="ChEBI" id="CHEBI:140395"/>
        <dbReference type="EC" id="2.7.7.48"/>
    </reaction>
</comment>
<comment type="subcellular location">
    <molecule>Putative helicase</molecule>
    <subcellularLocation>
        <location evidence="18">Host membrane</location>
        <topology evidence="18">Single-pass membrane protein</topology>
    </subcellularLocation>
    <subcellularLocation>
        <location evidence="7">Host cytoplasm</location>
        <location evidence="7">Host perinuclear region</location>
    </subcellularLocation>
</comment>
<comment type="subcellular location">
    <molecule>RNA-directed RNA polymerase</molecule>
    <subcellularLocation>
        <location evidence="5">Host endoplasmic reticulum</location>
    </subcellularLocation>
</comment>
<comment type="subcellular location">
    <molecule>Protease cofactor</molecule>
    <subcellularLocation>
        <location evidence="7">Host cytoplasm</location>
        <location evidence="7">Host perinuclear region</location>
    </subcellularLocation>
</comment>
<comment type="PTM">
    <molecule>RNA1 polyprotein</molecule>
    <text evidence="9 12 13 15">Specific enzymatic cleavages by picornain 3C-like protease in vivo yield mature proteins (PubMed:1431806, PubMed:16789216, PubMed:16789257, PubMed:7964626). Picornain 3C-like protease is autocatalytically processed.</text>
</comment>
<comment type="PTM">
    <molecule>Viral genome-linked protein</molecule>
    <text evidence="17">Uridylylated by the polymerase and is covalently linked to the 5'-end of genomic RNA. This uridylylated form acts as a nucleotide-peptide primer for the polymerase.</text>
</comment>
<keyword id="KW-0067">ATP-binding</keyword>
<keyword id="KW-0191">Covalent protein-RNA linkage</keyword>
<keyword id="KW-0903">Direct protein sequencing</keyword>
<keyword id="KW-0347">Helicase</keyword>
<keyword id="KW-1035">Host cytoplasm</keyword>
<keyword id="KW-1038">Host endoplasmic reticulum</keyword>
<keyword id="KW-1043">Host membrane</keyword>
<keyword id="KW-0378">Hydrolase</keyword>
<keyword id="KW-0472">Membrane</keyword>
<keyword id="KW-0547">Nucleotide-binding</keyword>
<keyword id="KW-0548">Nucleotidyltransferase</keyword>
<keyword id="KW-0597">Phosphoprotein</keyword>
<keyword id="KW-0645">Protease</keyword>
<keyword id="KW-1185">Reference proteome</keyword>
<keyword id="KW-0696">RNA-directed RNA polymerase</keyword>
<keyword id="KW-0788">Thiol protease</keyword>
<keyword id="KW-0808">Transferase</keyword>
<keyword id="KW-0812">Transmembrane</keyword>
<keyword id="KW-1133">Transmembrane helix</keyword>
<keyword id="KW-0693">Viral RNA replication</keyword>
<organismHost>
    <name type="scientific">Cajanus cajan</name>
    <name type="common">Pigeon pea</name>
    <name type="synonym">Cajanus indicus</name>
    <dbReference type="NCBI Taxonomy" id="3821"/>
</organismHost>
<organismHost>
    <name type="scientific">Crotalaria juncea</name>
    <name type="common">Sunn hemp</name>
    <dbReference type="NCBI Taxonomy" id="3829"/>
</organismHost>
<organismHost>
    <name type="scientific">Vigna unguiculata</name>
    <name type="common">Cowpea</name>
    <dbReference type="NCBI Taxonomy" id="3917"/>
</organismHost>
<reference key="1">
    <citation type="journal article" date="1983" name="EMBO J.">
        <title>The nucleotide sequence of cowpea mosaic virus B RNA.</title>
        <authorList>
            <person name="Lomonossoff G.P."/>
            <person name="Shanks M."/>
        </authorList>
    </citation>
    <scope>NUCLEOTIDE SEQUENCE [GENOMIC RNA]</scope>
</reference>
<reference key="2">
    <citation type="journal article" date="1984" name="EMBO J.">
        <title>Cowpea mosaic virus VPg: sequencing of radiochemically modified protein allows mapping of the gene on B RNA.</title>
        <authorList>
            <person name="Zabel P."/>
            <person name="Moerman M."/>
            <person name="Lomonossoff G."/>
            <person name="Shanks M."/>
            <person name="Beyreuther K."/>
        </authorList>
    </citation>
    <scope>PROTEIN SEQUENCE OF 920-922</scope>
    <scope>IDENTIFICATION (VIRAL GENOME-LINKED PROTEIN)</scope>
    <scope>FUNCTION (VIRAL GENOME-LINKED PROTEIN)</scope>
</reference>
<reference key="3">
    <citation type="journal article" date="1986" name="J. Virol.">
        <title>Determination of the proteolytic processing sites in the polyprotein encoded by the bottom-component RNA of cowpea mosaic virus.</title>
        <authorList>
            <person name="Wellink J."/>
            <person name="Rezelman G."/>
            <person name="Goldbach R."/>
            <person name="Beyreuther K."/>
        </authorList>
    </citation>
    <scope>PROTEIN SEQUENCE OF 2-39; 327-349; 948-979 AND 1156-1178</scope>
    <scope>PROTEOLYTIC CLEAVAGE (RNA1 POLYPROTEIN)</scope>
</reference>
<reference key="4">
    <citation type="journal article" date="1982" name="J. Virol.">
        <title>Expression of Middle-Component RNA of Cowpea Mosaic Virus: In Vitro Generation of a Precursor to Both Capsid Proteins by a Bottom-Component RNA-Encoded Protease from Infected Cells.</title>
        <authorList>
            <person name="Franssen H."/>
            <person name="Goldbach R."/>
            <person name="Broekhuijsen M."/>
            <person name="Moerman M."/>
            <person name="van Kammen A."/>
        </authorList>
    </citation>
    <scope>PROTEOLYTIC CLEAVAGE (RNA1 POLYPROTEIN)</scope>
    <scope>CATALYTIC ACTIVITY (PICORNAIN 3C-LIKE PROTEASE)</scope>
    <scope>FUNCTION (PICORNAIN 3C-LIKE PROTEASE)</scope>
</reference>
<reference key="5">
    <citation type="journal article" date="1987" name="J. Gen. Virol.">
        <title>The genome-linked protein of cowpea mosaic virus is bound to the 5' terminus of virus RNA by a phosphodiester linkage to serine.</title>
        <authorList>
            <person name="Jaegle M."/>
            <person name="Wellink J."/>
            <person name="Goldbach R."/>
        </authorList>
    </citation>
    <scope>COVALENT RNA LINKAGE AT SER-920 (VPG)</scope>
    <scope>URIDYLYLATION (VIRAL GENOME-LINKED PROTEIN)</scope>
</reference>
<reference key="6">
    <citation type="journal article" date="1987" name="EMBO J.">
        <title>In vitro expression of a full-length DNA copy of cowpea mosaic virus B RNA: identification of the B RNA encoded 24-kd protein as a viral protease.</title>
        <authorList>
            <person name="Verver J."/>
            <person name="Goldbach R."/>
            <person name="Garcia J.A."/>
            <person name="Vos P."/>
        </authorList>
    </citation>
    <scope>FUNCTION (PICORNAIN 3C-LIKE PROTEASE)</scope>
</reference>
<reference key="7">
    <citation type="journal article" date="1991" name="Virology">
        <title>Mutational analysis of the putative catalytic triad of the cowpea mosaic virus 24K protease.</title>
        <authorList>
            <person name="Dessens J.T."/>
            <person name="Lomonossoff G.P."/>
        </authorList>
    </citation>
    <scope>ACTIVE SITE (PICORNAIN 3C-LIKE PROTEASE)</scope>
    <scope>MUTAGENESIS OF CYS-1113</scope>
</reference>
<reference key="8">
    <citation type="journal article" date="1992" name="Virology">
        <title>A regulatory role for the 32K protein in proteolytic processing of cowpea mosaic virus polyproteins.</title>
        <authorList>
            <person name="Peters S.A."/>
            <person name="Voorhorst W.G."/>
            <person name="Wery J."/>
            <person name="Wellink J."/>
            <person name="van Kammen A."/>
        </authorList>
    </citation>
    <scope>FUNCTION (PROTEASE COFACTOR)</scope>
</reference>
<reference key="9">
    <citation type="journal article" date="1992" name="J. Gen. Virol.">
        <title>Synthesis of the complete 200K polyprotein encoded by cowpea mosaic virus B-RNA in insect cells.</title>
        <authorList>
            <person name="van Bokhoven H."/>
            <person name="van Lent J.W."/>
            <person name="Custers R."/>
            <person name="Vlak J.M."/>
            <person name="Wellink J."/>
            <person name="van Kammen A."/>
        </authorList>
    </citation>
    <scope>CATALYTIC ACTIVITY (RNA-DIRECTED RNA POLYMERASE)</scope>
    <scope>FUNCTION (RNA-DIRECTED RNA POLYMERASE)</scope>
    <scope>PROTEOLYTIC CLEAVAGE (RNA1 POLYPROTEIN)</scope>
</reference>
<reference key="10">
    <citation type="journal article" date="1994" name="J. Gen. Virol.">
        <title>The NTP-binding motif in cowpea mosaic virus B polyprotein is essential for viral replication.</title>
        <authorList>
            <person name="Peters S.A."/>
            <person name="Verver J."/>
            <person name="Nollen E.A."/>
            <person name="van Lent J.W."/>
            <person name="Wellink J."/>
            <person name="van Kammen A."/>
        </authorList>
    </citation>
    <scope>MUTAGENESIS OF LYS-500 AND ASP-545</scope>
    <scope>PROTEOLYTIC CLEAVAGE (RNA1 POLYPROTEIN)</scope>
</reference>
<reference key="11">
    <citation type="journal article" date="1996" name="J. Gen. Virol.">
        <title>The 24 kDa proteinases of comoviruses are virus-specific in cis as well as in trans.</title>
        <authorList>
            <person name="Shanks M."/>
            <person name="Dessens J.T."/>
            <person name="Lomonossoff G.P."/>
        </authorList>
    </citation>
    <scope>FUNCTION (PICORNAIN 3C-LIKE PROTEASE)</scope>
</reference>
<reference key="12">
    <citation type="journal article" date="2000" name="J. Virol.">
        <title>Cowpea mosaic virus infection induces a massive proliferation of endoplasmic reticulum but not Golgi membranes and is dependent on de novo membrane synthesis.</title>
        <authorList>
            <person name="Carette J.E."/>
            <person name="Stuiver M."/>
            <person name="Van Lent J."/>
            <person name="Wellink J."/>
            <person name="Van Kammen A."/>
        </authorList>
    </citation>
    <scope>SUBCELLULAR LOCATION (RNA-DIRECTED RNA POLYMERASE)</scope>
</reference>
<reference key="13">
    <citation type="journal article" date="2001" name="Virology">
        <title>Mutational analysis of the genome-linked protein of cowpea mosaic virus.</title>
        <authorList>
            <person name="Carette J.E."/>
            <person name="Kujawa A."/>
            <person name="Guhl K."/>
            <person name="Verver J."/>
            <person name="Wellink J."/>
            <person name="Van Kammen A."/>
        </authorList>
    </citation>
    <scope>FUNCTION (VIRAL GENOME-LINKED PROTEIN)</scope>
    <scope>MUTAGENESIS OF 920-SER--LYS-922; 928-MET-GLN-929; 934-ASN--VAL-936; 939-LYS--VAL-942; 945-ASP-ALA-946 AND GLN-947</scope>
</reference>
<reference key="14">
    <citation type="journal article" date="2002" name="J. Virol.">
        <title>Cowpea mosaic virus 32- and 60-kilodalton replication proteins target and change the morphology of endoplasmic reticulum membranes.</title>
        <authorList>
            <person name="Carette J.E."/>
            <person name="van Lent J."/>
            <person name="MacFarlane S.A."/>
            <person name="Wellink J."/>
            <person name="van Kammen A."/>
        </authorList>
    </citation>
    <scope>FUNCTION (PROTEASE COFACTOR)</scope>
    <scope>FUNCTION (PUTATIVE HELICASE)</scope>
    <scope>SUBCELLULAR LOCATION (PROTEASE COFACTOR)</scope>
    <scope>SUBCELLULAR LOCATION (PUTATIVE HELICASE)</scope>
</reference>
<protein>
    <recommendedName>
        <fullName>RNA1 polyprotein</fullName>
    </recommendedName>
    <alternativeName>
        <fullName>B RNA polyprotein</fullName>
    </alternativeName>
    <alternativeName>
        <fullName>Bottom component polyprotein</fullName>
    </alternativeName>
    <alternativeName>
        <fullName>Genome polyprotein B</fullName>
    </alternativeName>
    <alternativeName>
        <fullName>P1</fullName>
    </alternativeName>
    <component>
        <recommendedName>
            <fullName>Protease cofactor</fullName>
        </recommendedName>
        <alternativeName>
            <fullName>32 kDa protein</fullName>
        </alternativeName>
    </component>
    <component>
        <recommendedName>
            <fullName>Putative helicase</fullName>
            <ecNumber>3.6.4.-</ecNumber>
        </recommendedName>
        <alternativeName>
            <fullName>58 kDa protein</fullName>
        </alternativeName>
        <alternativeName>
            <fullName>Membrane-binding protein</fullName>
        </alternativeName>
        <alternativeName>
            <fullName>NTP-binding protein</fullName>
            <shortName>NTB</shortName>
        </alternativeName>
    </component>
    <component>
        <recommendedName>
            <fullName>Viral genome-linked protein</fullName>
        </recommendedName>
        <alternativeName>
            <fullName>VPg</fullName>
        </alternativeName>
    </component>
    <component>
        <recommendedName>
            <fullName>Picornain 3C-like protease</fullName>
            <shortName>3C-like protease</shortName>
            <ecNumber evidence="12">3.4.22.-</ecNumber>
        </recommendedName>
        <alternativeName>
            <fullName>24 kDa protein</fullName>
        </alternativeName>
    </component>
    <component>
        <recommendedName>
            <fullName evidence="2">RNA-directed RNA polymerase</fullName>
            <ecNumber evidence="2 9">2.7.7.48</ecNumber>
        </recommendedName>
        <alternativeName>
            <fullName>87 kDa protein</fullName>
        </alternativeName>
    </component>
</protein>
<dbReference type="EC" id="3.6.4.-"/>
<dbReference type="EC" id="3.4.22.-" evidence="12"/>
<dbReference type="EC" id="2.7.7.48" evidence="2 9"/>
<dbReference type="EMBL" id="X00206">
    <property type="protein sequence ID" value="CAA25029.1"/>
    <property type="molecule type" value="Genomic_RNA"/>
</dbReference>
<dbReference type="PIR" id="A04211">
    <property type="entry name" value="GNWE2C"/>
</dbReference>
<dbReference type="RefSeq" id="NP_613283.1">
    <property type="nucleotide sequence ID" value="NC_003549.1"/>
</dbReference>
<dbReference type="BMRB" id="P03600"/>
<dbReference type="SMR" id="P03600"/>
<dbReference type="MEROPS" id="C03.003"/>
<dbReference type="GeneID" id="956628"/>
<dbReference type="KEGG" id="vg:956628"/>
<dbReference type="Proteomes" id="UP000008589">
    <property type="component" value="Genome"/>
</dbReference>
<dbReference type="GO" id="GO:0044165">
    <property type="term" value="C:host cell endoplasmic reticulum"/>
    <property type="evidence" value="ECO:0007669"/>
    <property type="project" value="UniProtKB-SubCell"/>
</dbReference>
<dbReference type="GO" id="GO:0033644">
    <property type="term" value="C:host cell membrane"/>
    <property type="evidence" value="ECO:0007669"/>
    <property type="project" value="UniProtKB-SubCell"/>
</dbReference>
<dbReference type="GO" id="GO:0044220">
    <property type="term" value="C:host cell perinuclear region of cytoplasm"/>
    <property type="evidence" value="ECO:0007669"/>
    <property type="project" value="UniProtKB-SubCell"/>
</dbReference>
<dbReference type="GO" id="GO:0016020">
    <property type="term" value="C:membrane"/>
    <property type="evidence" value="ECO:0007669"/>
    <property type="project" value="UniProtKB-KW"/>
</dbReference>
<dbReference type="GO" id="GO:0005524">
    <property type="term" value="F:ATP binding"/>
    <property type="evidence" value="ECO:0007669"/>
    <property type="project" value="UniProtKB-KW"/>
</dbReference>
<dbReference type="GO" id="GO:0004197">
    <property type="term" value="F:cysteine-type endopeptidase activity"/>
    <property type="evidence" value="ECO:0007669"/>
    <property type="project" value="InterPro"/>
</dbReference>
<dbReference type="GO" id="GO:0003723">
    <property type="term" value="F:RNA binding"/>
    <property type="evidence" value="ECO:0007669"/>
    <property type="project" value="InterPro"/>
</dbReference>
<dbReference type="GO" id="GO:0003724">
    <property type="term" value="F:RNA helicase activity"/>
    <property type="evidence" value="ECO:0007669"/>
    <property type="project" value="InterPro"/>
</dbReference>
<dbReference type="GO" id="GO:0003968">
    <property type="term" value="F:RNA-directed RNA polymerase activity"/>
    <property type="evidence" value="ECO:0007669"/>
    <property type="project" value="UniProtKB-KW"/>
</dbReference>
<dbReference type="GO" id="GO:0006351">
    <property type="term" value="P:DNA-templated transcription"/>
    <property type="evidence" value="ECO:0007669"/>
    <property type="project" value="InterPro"/>
</dbReference>
<dbReference type="GO" id="GO:0006508">
    <property type="term" value="P:proteolysis"/>
    <property type="evidence" value="ECO:0007669"/>
    <property type="project" value="UniProtKB-KW"/>
</dbReference>
<dbReference type="GO" id="GO:0039694">
    <property type="term" value="P:viral RNA genome replication"/>
    <property type="evidence" value="ECO:0007669"/>
    <property type="project" value="InterPro"/>
</dbReference>
<dbReference type="CDD" id="cd23196">
    <property type="entry name" value="Secoviridae_RdRp"/>
    <property type="match status" value="1"/>
</dbReference>
<dbReference type="Gene3D" id="3.30.70.270">
    <property type="match status" value="1"/>
</dbReference>
<dbReference type="Gene3D" id="2.40.10.10">
    <property type="entry name" value="Trypsin-like serine proteases"/>
    <property type="match status" value="1"/>
</dbReference>
<dbReference type="InterPro" id="IPR043502">
    <property type="entry name" value="DNA/RNA_pol_sf"/>
</dbReference>
<dbReference type="InterPro" id="IPR004004">
    <property type="entry name" value="Helic/Pol/Pept_Calicivir-typ"/>
</dbReference>
<dbReference type="InterPro" id="IPR000605">
    <property type="entry name" value="Helicase_SF3_ssDNA/RNA_vir"/>
</dbReference>
<dbReference type="InterPro" id="IPR014759">
    <property type="entry name" value="Helicase_SF3_ssRNA_vir"/>
</dbReference>
<dbReference type="InterPro" id="IPR044067">
    <property type="entry name" value="PCV_3C_PRO"/>
</dbReference>
<dbReference type="InterPro" id="IPR000199">
    <property type="entry name" value="Peptidase_C3A/C3B_picornavir"/>
</dbReference>
<dbReference type="InterPro" id="IPR009003">
    <property type="entry name" value="Peptidase_S1_PA"/>
</dbReference>
<dbReference type="InterPro" id="IPR043504">
    <property type="entry name" value="Peptidase_S1_PA_chymotrypsin"/>
</dbReference>
<dbReference type="InterPro" id="IPR043128">
    <property type="entry name" value="Rev_trsase/Diguanyl_cyclase"/>
</dbReference>
<dbReference type="InterPro" id="IPR001205">
    <property type="entry name" value="RNA-dir_pol_C"/>
</dbReference>
<dbReference type="InterPro" id="IPR007094">
    <property type="entry name" value="RNA-dir_pol_PSvirus"/>
</dbReference>
<dbReference type="Pfam" id="PF00548">
    <property type="entry name" value="Peptidase_C3"/>
    <property type="match status" value="1"/>
</dbReference>
<dbReference type="Pfam" id="PF00680">
    <property type="entry name" value="RdRP_1"/>
    <property type="match status" value="1"/>
</dbReference>
<dbReference type="Pfam" id="PF00910">
    <property type="entry name" value="RNA_helicase"/>
    <property type="match status" value="1"/>
</dbReference>
<dbReference type="PRINTS" id="PR00918">
    <property type="entry name" value="CALICVIRUSNS"/>
</dbReference>
<dbReference type="SUPFAM" id="SSF56672">
    <property type="entry name" value="DNA/RNA polymerases"/>
    <property type="match status" value="1"/>
</dbReference>
<dbReference type="SUPFAM" id="SSF50494">
    <property type="entry name" value="Trypsin-like serine proteases"/>
    <property type="match status" value="1"/>
</dbReference>
<dbReference type="PROSITE" id="PS51874">
    <property type="entry name" value="PCV_3C_PRO"/>
    <property type="match status" value="1"/>
</dbReference>
<dbReference type="PROSITE" id="PS50507">
    <property type="entry name" value="RDRP_SSRNA_POS"/>
    <property type="match status" value="1"/>
</dbReference>
<dbReference type="PROSITE" id="PS51218">
    <property type="entry name" value="SF3_HELICASE_2"/>
    <property type="match status" value="1"/>
</dbReference>
<organism>
    <name type="scientific">Cowpea mosaic virus (strain SB)</name>
    <name type="common">CPMV</name>
    <dbReference type="NCBI Taxonomy" id="928299"/>
    <lineage>
        <taxon>Viruses</taxon>
        <taxon>Riboviria</taxon>
        <taxon>Orthornavirae</taxon>
        <taxon>Pisuviricota</taxon>
        <taxon>Pisoniviricetes</taxon>
        <taxon>Picornavirales</taxon>
        <taxon>Secoviridae</taxon>
        <taxon>Comovirinae</taxon>
        <taxon>Comovirus</taxon>
        <taxon>Comovirus vignae</taxon>
    </lineage>
</organism>
<proteinExistence type="evidence at protein level"/>
<name>POL1_CPMVS</name>
<sequence length="1866" mass="209810">MGLPEYEADSEALLSQLTIEFTPGMTVSSLLAQVTTNDFHSAIEFFAAEKAVDIEGVHYNAYMQQIRKNPSLLRISVVAYAFHVSDMVAETMSYDVYEFLYKHYALFISNLVTRTLRFKELLLFCKQQFLEKMQASIVWAPELEQYLQVEGDAVAQGVSQLLYKMVTWVPTFVRGAVDWSVDAILVSFRKHFEKMVQEYVPMAHRVCSWLSQLWDKIVQWISQASETMGWFLDGCRDLMTWGIATLATCSALSLVEKLLVAMGFLVEPFGLSGIFLRTGVVAAACYNYGTNSKGFAEMMALLSLAANCVSTVIVGGFFPGEKDNAQSSPVILLEGLAGQMQNFCETTLVSVGKTCTAVNAISTCCGNLKALAGRILGMLRDFIWKTLGFETRFLADASLLFGEDVDGWLKAISDLRDQFIAKSYCSQDEMMQILVLLEKGRQMRKSGLSKGGISPAIINLILKGINDLEQLNRSCSVQGVRGVRKMPFTIFFQGKSRTGKSLLMSQVTKDFQDHYGLGGETVYSRNPCDQYWSGYRRQPFVLMDDFAAVVTEPSAEAQMINLISSAPYPLNMAGLEEKGICFDSQFVFVSTNFLEVSPEAKVRDDEAFKNRRHVIVQVSNDPAKAYDAANFASNQIYTILAWKDGRYNTVCVIEDYDELVAYLLTRSQQHAEEQEKNLANMMKSATFESHFKSLVEVLELGSMISAGFDIIRPEKLPSEAKEKRVLYSIPYNGEYCNALIDDNYNVTCWFGECVGNPEQLSKYSEKMLLGAYEFLLCSESLNVVIQAHLKEMVCPHHYDKELNFIGKIGETYYHNQMVSNIGSMQKWHRAILFGIGVLLGKEKEKTWYQVQVANVKQALYDMYTKEIRDWPMPIKVTCGIVLAAIGGSAFWKVFQQLVGSGNGPVLMGVAAGAFSAEPQSRKPNRFDMQQYRYNNVPLKRRVWADAQMSLDQSSVAIMSKCRANLVFGGTNLQIVMVPGRRFLACKHFFTHIKTKLRVEIVMDGRRYYHQFDPANIYDIPDSELVLYSHPSLEDVSHSCWDLFCWDPDKELPSVFGADFLSCKYNKFGGFYEAQYADIKVRTKKECLTIQSGNYVNKVSRYLEYEAPTIPEDCGSLVIAHIGGKHKIVGVHVAGIQGKIGCASLLPPLEPIAQAQGAEEYFDFLPAEENVSSGVAMVAGLKQGVYIPLPTKTALVETPSEWHLDTPCDKVPSILVPTDPRIPAQHEGYDPAKSGVSKYSQPMSALDPELLGEVANDVLELWHDCAVDWDDFGEVSLEEALNGCEGVEYMERIPLATSEGFPHILSRNGKEKGKRRFVQGDDCVVSLIPGTTVAKAYEELEASAHRFVPALVGIECPKDEKLPMRKVFDKPKTRCFTILPMEYNLVVRRKFLNFVRFIMANRHRLSCQVGINPYSMEWSRLAARMKEKGNDVLCCDYSSFDGLLSKQVMDVIASMINELCGGEDQLKNARRNLLMACCSRLAICKNTVWRVECGIPSGFPMTVIVNSIFNEILIRYHYKKLMREQQAPELMVQSFDKLIGLVTYGDDNLISVNAVVTPYFDGKKLKQSLAQGGVTITDGKDKTSLELPFRRLEECDFLKRTFVQRSSTIWDAPEDKASLWSQLHYVNCNNCEKEVAYLTNVVNVLRELYMHSPREATEFRRKVLKKVSWITSGDLPTLAQLQEFYEYQRQQGGADNNDTCDLLTSVDLLGPPLSFEKEAMHGCKVSEEIVTKNLAYYDFKRKGEDEVVFLFNTLYPQSSLPDGCHSVTWSQGSGRGGLPTQSWMSYNISRKDSNINKIIRTAVSSKKRVIFCARDNMVPVNIVALLCAVRNKLMPTAVSNATLVKVMENAKAFKFLPEEFNFAFSDV</sequence>
<evidence type="ECO:0000255" key="1"/>
<evidence type="ECO:0000255" key="2">
    <source>
        <dbReference type="PROSITE-ProRule" id="PRU00539"/>
    </source>
</evidence>
<evidence type="ECO:0000255" key="3">
    <source>
        <dbReference type="PROSITE-ProRule" id="PRU00551"/>
    </source>
</evidence>
<evidence type="ECO:0000255" key="4">
    <source>
        <dbReference type="PROSITE-ProRule" id="PRU01222"/>
    </source>
</evidence>
<evidence type="ECO:0000269" key="5">
    <source>
    </source>
</evidence>
<evidence type="ECO:0000269" key="6">
    <source>
    </source>
</evidence>
<evidence type="ECO:0000269" key="7">
    <source>
    </source>
</evidence>
<evidence type="ECO:0000269" key="8">
    <source>
    </source>
</evidence>
<evidence type="ECO:0000269" key="9">
    <source>
    </source>
</evidence>
<evidence type="ECO:0000269" key="10">
    <source>
    </source>
</evidence>
<evidence type="ECO:0000269" key="11">
    <source>
    </source>
</evidence>
<evidence type="ECO:0000269" key="12">
    <source>
    </source>
</evidence>
<evidence type="ECO:0000269" key="13">
    <source>
    </source>
</evidence>
<evidence type="ECO:0000269" key="14">
    <source>
    </source>
</evidence>
<evidence type="ECO:0000269" key="15">
    <source>
    </source>
</evidence>
<evidence type="ECO:0000269" key="16">
    <source>
    </source>
</evidence>
<evidence type="ECO:0000269" key="17">
    <source ref="5"/>
</evidence>
<evidence type="ECO:0000305" key="18"/>
<evidence type="ECO:0000305" key="19">
    <source>
    </source>
</evidence>
<evidence type="ECO:0000305" key="20">
    <source>
    </source>
</evidence>
<evidence type="ECO:0000305" key="21">
    <source>
    </source>
</evidence>
<feature type="initiator methionine" description="Removed" evidence="13">
    <location>
        <position position="1"/>
    </location>
</feature>
<feature type="chain" id="PRO_0000445834" description="RNA1 polyprotein">
    <location>
        <begin position="2"/>
        <end position="1866"/>
    </location>
</feature>
<feature type="chain" id="PRO_0000037006" description="Protease cofactor">
    <location>
        <begin position="2"/>
        <end position="326"/>
    </location>
</feature>
<feature type="chain" id="PRO_0000037007" description="Putative helicase">
    <location>
        <begin position="327"/>
        <end position="919"/>
    </location>
</feature>
<feature type="chain" id="PRO_0000037008" description="Viral genome-linked protein">
    <location>
        <begin position="920"/>
        <end position="947"/>
    </location>
</feature>
<feature type="chain" id="PRO_0000037009" description="Picornain 3C-like protease">
    <location>
        <begin position="948"/>
        <end position="1155"/>
    </location>
</feature>
<feature type="chain" id="PRO_0000037010" description="RNA-directed RNA polymerase">
    <location>
        <begin position="1156"/>
        <end position="1866"/>
    </location>
</feature>
<feature type="transmembrane region" description="Helical" evidence="1">
    <location>
        <begin position="897"/>
        <end position="917"/>
    </location>
</feature>
<feature type="domain" description="SF3 helicase" evidence="3">
    <location>
        <begin position="462"/>
        <end position="633"/>
    </location>
</feature>
<feature type="domain" description="Peptidase C3" evidence="4">
    <location>
        <begin position="945"/>
        <end position="1150"/>
    </location>
</feature>
<feature type="domain" description="RdRp catalytic" evidence="2">
    <location>
        <begin position="1429"/>
        <end position="1559"/>
    </location>
</feature>
<feature type="active site" description="For picornain 3C-like protease activity" evidence="4 14">
    <location>
        <position position="987"/>
    </location>
</feature>
<feature type="active site" description="For picornain 3C-like protease activity" evidence="4 14">
    <location>
        <position position="1023"/>
    </location>
</feature>
<feature type="active site" description="For picornain 3C-like protease activity" evidence="4 14">
    <location>
        <position position="1113"/>
    </location>
</feature>
<feature type="binding site" evidence="3 21">
    <location>
        <begin position="494"/>
        <end position="501"/>
    </location>
    <ligand>
        <name>ATP</name>
        <dbReference type="ChEBI" id="CHEBI:30616"/>
    </ligand>
</feature>
<feature type="site" description="Cleavage; by viral protease" evidence="13">
    <location>
        <begin position="326"/>
        <end position="327"/>
    </location>
</feature>
<feature type="site" description="Cleavage; by viral protease" evidence="20">
    <location>
        <begin position="919"/>
        <end position="920"/>
    </location>
</feature>
<feature type="site" description="Cleavage; by viral protease" evidence="13">
    <location>
        <begin position="947"/>
        <end position="948"/>
    </location>
</feature>
<feature type="site" description="Cleavage; by viral protease" evidence="13">
    <location>
        <begin position="1155"/>
        <end position="1156"/>
    </location>
</feature>
<feature type="modified residue" description="O-(5'-phospho-RNA)-serine" evidence="17">
    <location>
        <position position="920"/>
    </location>
</feature>
<feature type="mutagenesis site" description="Complete loss of viral replication; reduced ATP-binding by the RNA-directed RNA polymerase; no effect on polyprotein processing." evidence="15">
    <original>K</original>
    <variation>T</variation>
    <location>
        <position position="500"/>
    </location>
</feature>
<feature type="mutagenesis site" description="Complete loss of viral replication; no effect on polyprotein processing." evidence="15">
    <original>D</original>
    <variation>P</variation>
    <location>
        <position position="545"/>
    </location>
</feature>
<feature type="mutagenesis site" description="Increased efficiency of cleavage between the putative helicase and VPg. Complete loss of infectivity." evidence="6">
    <original>SRK</original>
    <variation>GRS</variation>
    <location>
        <begin position="920"/>
        <end position="922"/>
    </location>
</feature>
<feature type="mutagenesis site" description="Slightly decreased efficiency of cleavage between the putative helicase and VPg. Complete loss of infectivity.">
    <original>SR</original>
    <variation>YG</variation>
    <location>
        <begin position="920"/>
        <end position="921"/>
    </location>
</feature>
<feature type="mutagenesis site" description="Decreased efficiency of cleavage between the putative helicase and VPg. Complete loss of infectivity.">
    <original>S</original>
    <variation>T</variation>
    <location>
        <position position="920"/>
    </location>
</feature>
<feature type="mutagenesis site" description="No effect on infectivity." evidence="6">
    <original>MQ</original>
    <variation>VA</variation>
    <location>
        <begin position="928"/>
        <end position="929"/>
    </location>
</feature>
<feature type="mutagenesis site" description="80% decrease of infectivity." evidence="6">
    <original>NNV</original>
    <variation>RNI</variation>
    <location>
        <begin position="934"/>
        <end position="936"/>
    </location>
</feature>
<feature type="mutagenesis site" description="Complete loss of infectivity." evidence="6">
    <original>KRRV</original>
    <variation>RKRN</variation>
    <location>
        <begin position="939"/>
        <end position="942"/>
    </location>
</feature>
<feature type="mutagenesis site" description="50% decrease of infectivity. Replicative proteins display a uniform cytoplasmic distribution, instead of the normal accumulation near the nucleus." evidence="6">
    <original>DA</original>
    <variation>EG</variation>
    <location>
        <begin position="945"/>
        <end position="946"/>
    </location>
</feature>
<feature type="mutagenesis site" description="Strongly decreased efficiency of cleavage between VPg and 3C-like protease. Complete loss of infectivity." evidence="6">
    <original>Q</original>
    <variation>H</variation>
    <location>
        <position position="947"/>
    </location>
</feature>
<feature type="mutagenesis site" description="Reduced protease activity." evidence="14">
    <original>C</original>
    <variation>S</variation>
    <location>
        <position position="1113"/>
    </location>
</feature>
<accession>P03600</accession>